<organism>
    <name type="scientific">Arabidopsis thaliana</name>
    <name type="common">Mouse-ear cress</name>
    <dbReference type="NCBI Taxonomy" id="3702"/>
    <lineage>
        <taxon>Eukaryota</taxon>
        <taxon>Viridiplantae</taxon>
        <taxon>Streptophyta</taxon>
        <taxon>Embryophyta</taxon>
        <taxon>Tracheophyta</taxon>
        <taxon>Spermatophyta</taxon>
        <taxon>Magnoliopsida</taxon>
        <taxon>eudicotyledons</taxon>
        <taxon>Gunneridae</taxon>
        <taxon>Pentapetalae</taxon>
        <taxon>rosids</taxon>
        <taxon>malvids</taxon>
        <taxon>Brassicales</taxon>
        <taxon>Brassicaceae</taxon>
        <taxon>Camelineae</taxon>
        <taxon>Arabidopsis</taxon>
    </lineage>
</organism>
<proteinExistence type="evidence at protein level"/>
<accession>Q9LT08</accession>
<accession>Q0WQQ6</accession>
<accession>Q8LD11</accession>
<reference key="1">
    <citation type="journal article" date="2004" name="J. Biol. Chem.">
        <title>Purification of the Arabidopsis 26 S proteasome: biochemical and molecular analyses revealed the presence of multiple isoforms.</title>
        <authorList>
            <person name="Yang P."/>
            <person name="Fu H."/>
            <person name="Walker J."/>
            <person name="Papa C.M."/>
            <person name="Smalle J."/>
            <person name="Ju Y.-M."/>
            <person name="Vierstra R.D."/>
        </authorList>
    </citation>
    <scope>NUCLEOTIDE SEQUENCE [MRNA]</scope>
    <scope>SUBUNIT</scope>
    <scope>IDENTIFICATION BY MASS SPECTROMETRY</scope>
    <scope>TISSUE SPECIFICITY</scope>
    <source>
        <strain>cv. Columbia</strain>
    </source>
</reference>
<reference key="2">
    <citation type="journal article" date="2000" name="DNA Res.">
        <title>Structural analysis of Arabidopsis thaliana chromosome 5. X. Sequence features of the regions of 3,076,755 bp covered by sixty P1 and TAC clones.</title>
        <authorList>
            <person name="Sato S."/>
            <person name="Nakamura Y."/>
            <person name="Kaneko T."/>
            <person name="Katoh T."/>
            <person name="Asamizu E."/>
            <person name="Kotani H."/>
            <person name="Tabata S."/>
        </authorList>
    </citation>
    <scope>NUCLEOTIDE SEQUENCE [LARGE SCALE GENOMIC DNA]</scope>
    <source>
        <strain>cv. Columbia</strain>
    </source>
</reference>
<reference key="3">
    <citation type="journal article" date="2017" name="Plant J.">
        <title>Araport11: a complete reannotation of the Arabidopsis thaliana reference genome.</title>
        <authorList>
            <person name="Cheng C.Y."/>
            <person name="Krishnakumar V."/>
            <person name="Chan A.P."/>
            <person name="Thibaud-Nissen F."/>
            <person name="Schobel S."/>
            <person name="Town C.D."/>
        </authorList>
    </citation>
    <scope>GENOME REANNOTATION</scope>
    <source>
        <strain>cv. Columbia</strain>
    </source>
</reference>
<reference key="4">
    <citation type="journal article" date="2003" name="Science">
        <title>Empirical analysis of transcriptional activity in the Arabidopsis genome.</title>
        <authorList>
            <person name="Yamada K."/>
            <person name="Lim J."/>
            <person name="Dale J.M."/>
            <person name="Chen H."/>
            <person name="Shinn P."/>
            <person name="Palm C.J."/>
            <person name="Southwick A.M."/>
            <person name="Wu H.C."/>
            <person name="Kim C.J."/>
            <person name="Nguyen M."/>
            <person name="Pham P.K."/>
            <person name="Cheuk R.F."/>
            <person name="Karlin-Newmann G."/>
            <person name="Liu S.X."/>
            <person name="Lam B."/>
            <person name="Sakano H."/>
            <person name="Wu T."/>
            <person name="Yu G."/>
            <person name="Miranda M."/>
            <person name="Quach H.L."/>
            <person name="Tripp M."/>
            <person name="Chang C.H."/>
            <person name="Lee J.M."/>
            <person name="Toriumi M.J."/>
            <person name="Chan M.M."/>
            <person name="Tang C.C."/>
            <person name="Onodera C.S."/>
            <person name="Deng J.M."/>
            <person name="Akiyama K."/>
            <person name="Ansari Y."/>
            <person name="Arakawa T."/>
            <person name="Banh J."/>
            <person name="Banno F."/>
            <person name="Bowser L."/>
            <person name="Brooks S.Y."/>
            <person name="Carninci P."/>
            <person name="Chao Q."/>
            <person name="Choy N."/>
            <person name="Enju A."/>
            <person name="Goldsmith A.D."/>
            <person name="Gurjal M."/>
            <person name="Hansen N.F."/>
            <person name="Hayashizaki Y."/>
            <person name="Johnson-Hopson C."/>
            <person name="Hsuan V.W."/>
            <person name="Iida K."/>
            <person name="Karnes M."/>
            <person name="Khan S."/>
            <person name="Koesema E."/>
            <person name="Ishida J."/>
            <person name="Jiang P.X."/>
            <person name="Jones T."/>
            <person name="Kawai J."/>
            <person name="Kamiya A."/>
            <person name="Meyers C."/>
            <person name="Nakajima M."/>
            <person name="Narusaka M."/>
            <person name="Seki M."/>
            <person name="Sakurai T."/>
            <person name="Satou M."/>
            <person name="Tamse R."/>
            <person name="Vaysberg M."/>
            <person name="Wallender E.K."/>
            <person name="Wong C."/>
            <person name="Yamamura Y."/>
            <person name="Yuan S."/>
            <person name="Shinozaki K."/>
            <person name="Davis R.W."/>
            <person name="Theologis A."/>
            <person name="Ecker J.R."/>
        </authorList>
    </citation>
    <scope>NUCLEOTIDE SEQUENCE [LARGE SCALE MRNA]</scope>
    <source>
        <strain>cv. Columbia</strain>
    </source>
</reference>
<reference key="5">
    <citation type="submission" date="2006-07" db="EMBL/GenBank/DDBJ databases">
        <title>Large-scale analysis of RIKEN Arabidopsis full-length (RAFL) cDNAs.</title>
        <authorList>
            <person name="Totoki Y."/>
            <person name="Seki M."/>
            <person name="Ishida J."/>
            <person name="Nakajima M."/>
            <person name="Enju A."/>
            <person name="Kamiya A."/>
            <person name="Narusaka M."/>
            <person name="Shin-i T."/>
            <person name="Nakagawa M."/>
            <person name="Sakamoto N."/>
            <person name="Oishi K."/>
            <person name="Kohara Y."/>
            <person name="Kobayashi M."/>
            <person name="Toyoda A."/>
            <person name="Sakaki Y."/>
            <person name="Sakurai T."/>
            <person name="Iida K."/>
            <person name="Akiyama K."/>
            <person name="Satou M."/>
            <person name="Toyoda T."/>
            <person name="Konagaya A."/>
            <person name="Carninci P."/>
            <person name="Kawai J."/>
            <person name="Hayashizaki Y."/>
            <person name="Shinozaki K."/>
        </authorList>
    </citation>
    <scope>NUCLEOTIDE SEQUENCE [LARGE SCALE MRNA]</scope>
    <source>
        <strain>cv. Columbia</strain>
    </source>
</reference>
<reference key="6">
    <citation type="submission" date="2002-03" db="EMBL/GenBank/DDBJ databases">
        <title>Full-length cDNA from Arabidopsis thaliana.</title>
        <authorList>
            <person name="Brover V.V."/>
            <person name="Troukhan M.E."/>
            <person name="Alexandrov N.A."/>
            <person name="Lu Y.-P."/>
            <person name="Flavell R.B."/>
            <person name="Feldmann K.A."/>
        </authorList>
    </citation>
    <scope>NUCLEOTIDE SEQUENCE [LARGE SCALE MRNA]</scope>
</reference>
<reference key="7">
    <citation type="journal article" date="2010" name="J. Biol. Chem.">
        <title>Affinity purification of the Arabidopsis 26 S proteasome reveals a diverse array of plant proteolytic complexes.</title>
        <authorList>
            <person name="Book A.J."/>
            <person name="Gladman N.P."/>
            <person name="Lee S.S."/>
            <person name="Scalf M."/>
            <person name="Smith L.M."/>
            <person name="Vierstra R.D."/>
        </authorList>
    </citation>
    <scope>IDENTIFICATION BY MASS SPECTROMETRY</scope>
    <scope>CHARACTERIZATION OF THE 26S PROTEASOME COMPLEX</scope>
    <scope>SUBUNIT</scope>
    <scope>UBIQUITINATION AT LYS-238</scope>
</reference>
<gene>
    <name type="primary">RPN11</name>
    <name type="ordered locus">At5g23540</name>
    <name type="ORF">MQM1.19</name>
</gene>
<dbReference type="EC" id="3.4.19.-"/>
<dbReference type="EMBL" id="AY230843">
    <property type="protein sequence ID" value="AAP86670.1"/>
    <property type="molecule type" value="mRNA"/>
</dbReference>
<dbReference type="EMBL" id="AY230844">
    <property type="protein sequence ID" value="AAP86671.1"/>
    <property type="molecule type" value="mRNA"/>
</dbReference>
<dbReference type="EMBL" id="AY230845">
    <property type="protein sequence ID" value="AAP86672.1"/>
    <property type="molecule type" value="mRNA"/>
</dbReference>
<dbReference type="EMBL" id="AB025633">
    <property type="protein sequence ID" value="BAA97246.1"/>
    <property type="molecule type" value="Genomic_DNA"/>
</dbReference>
<dbReference type="EMBL" id="CP002688">
    <property type="protein sequence ID" value="AED93181.1"/>
    <property type="molecule type" value="Genomic_DNA"/>
</dbReference>
<dbReference type="EMBL" id="AY070073">
    <property type="protein sequence ID" value="AAL49768.1"/>
    <property type="molecule type" value="mRNA"/>
</dbReference>
<dbReference type="EMBL" id="AY091329">
    <property type="protein sequence ID" value="AAM14268.1"/>
    <property type="molecule type" value="mRNA"/>
</dbReference>
<dbReference type="EMBL" id="AK228634">
    <property type="protein sequence ID" value="BAF00543.1"/>
    <property type="molecule type" value="mRNA"/>
</dbReference>
<dbReference type="EMBL" id="AY086277">
    <property type="protein sequence ID" value="AAM64349.1"/>
    <property type="molecule type" value="mRNA"/>
</dbReference>
<dbReference type="RefSeq" id="NP_197745.1">
    <molecule id="Q9LT08-1"/>
    <property type="nucleotide sequence ID" value="NM_122261.3"/>
</dbReference>
<dbReference type="SMR" id="Q9LT08"/>
<dbReference type="BioGRID" id="17695">
    <property type="interactions" value="91"/>
</dbReference>
<dbReference type="FunCoup" id="Q9LT08">
    <property type="interactions" value="4630"/>
</dbReference>
<dbReference type="IntAct" id="Q9LT08">
    <property type="interactions" value="3"/>
</dbReference>
<dbReference type="STRING" id="3702.Q9LT08"/>
<dbReference type="MEROPS" id="M67.A11"/>
<dbReference type="iPTMnet" id="Q9LT08"/>
<dbReference type="PaxDb" id="3702-AT5G23540.1"/>
<dbReference type="ProteomicsDB" id="224826">
    <molecule id="Q9LT08-1"/>
</dbReference>
<dbReference type="DNASU" id="832420"/>
<dbReference type="EnsemblPlants" id="AT5G23540.1">
    <molecule id="Q9LT08-1"/>
    <property type="protein sequence ID" value="AT5G23540.1"/>
    <property type="gene ID" value="AT5G23540"/>
</dbReference>
<dbReference type="GeneID" id="832420"/>
<dbReference type="Gramene" id="AT5G23540.1">
    <molecule id="Q9LT08-1"/>
    <property type="protein sequence ID" value="AT5G23540.1"/>
    <property type="gene ID" value="AT5G23540"/>
</dbReference>
<dbReference type="KEGG" id="ath:AT5G23540"/>
<dbReference type="Araport" id="AT5G23540"/>
<dbReference type="TAIR" id="AT5G23540"/>
<dbReference type="eggNOG" id="KOG1555">
    <property type="taxonomic scope" value="Eukaryota"/>
</dbReference>
<dbReference type="InParanoid" id="Q9LT08"/>
<dbReference type="OMA" id="KTGRHEM"/>
<dbReference type="OrthoDB" id="1936406at2759"/>
<dbReference type="PhylomeDB" id="Q9LT08"/>
<dbReference type="CD-CODE" id="4299E36E">
    <property type="entry name" value="Nucleolus"/>
</dbReference>
<dbReference type="PRO" id="PR:Q9LT08"/>
<dbReference type="Proteomes" id="UP000006548">
    <property type="component" value="Chromosome 5"/>
</dbReference>
<dbReference type="ExpressionAtlas" id="Q9LT08">
    <property type="expression patterns" value="baseline and differential"/>
</dbReference>
<dbReference type="GO" id="GO:0005634">
    <property type="term" value="C:nucleus"/>
    <property type="evidence" value="ECO:0000304"/>
    <property type="project" value="TAIR"/>
</dbReference>
<dbReference type="GO" id="GO:0000502">
    <property type="term" value="C:proteasome complex"/>
    <property type="evidence" value="ECO:0000314"/>
    <property type="project" value="TAIR"/>
</dbReference>
<dbReference type="GO" id="GO:0046872">
    <property type="term" value="F:metal ion binding"/>
    <property type="evidence" value="ECO:0007669"/>
    <property type="project" value="UniProtKB-KW"/>
</dbReference>
<dbReference type="GO" id="GO:0008237">
    <property type="term" value="F:metallopeptidase activity"/>
    <property type="evidence" value="ECO:0007669"/>
    <property type="project" value="UniProtKB-KW"/>
</dbReference>
<dbReference type="GO" id="GO:0030163">
    <property type="term" value="P:protein catabolic process"/>
    <property type="evidence" value="ECO:0000304"/>
    <property type="project" value="TAIR"/>
</dbReference>
<dbReference type="GO" id="GO:0006508">
    <property type="term" value="P:proteolysis"/>
    <property type="evidence" value="ECO:0007669"/>
    <property type="project" value="UniProtKB-KW"/>
</dbReference>
<dbReference type="CDD" id="cd08069">
    <property type="entry name" value="MPN_RPN11_CSN5"/>
    <property type="match status" value="1"/>
</dbReference>
<dbReference type="FunFam" id="3.40.140.10:FF:000001">
    <property type="entry name" value="26S proteasome non-ATPase regulatory subunit"/>
    <property type="match status" value="1"/>
</dbReference>
<dbReference type="Gene3D" id="3.40.140.10">
    <property type="entry name" value="Cytidine Deaminase, domain 2"/>
    <property type="match status" value="1"/>
</dbReference>
<dbReference type="InterPro" id="IPR000555">
    <property type="entry name" value="JAMM/MPN+_dom"/>
</dbReference>
<dbReference type="InterPro" id="IPR050242">
    <property type="entry name" value="JAMM_MPN+_peptidase_M67A"/>
</dbReference>
<dbReference type="InterPro" id="IPR037518">
    <property type="entry name" value="MPN"/>
</dbReference>
<dbReference type="InterPro" id="IPR056263">
    <property type="entry name" value="RPN11_C"/>
</dbReference>
<dbReference type="PANTHER" id="PTHR10410">
    <property type="entry name" value="EUKARYOTIC TRANSLATION INITIATION FACTOR 3 -RELATED"/>
    <property type="match status" value="1"/>
</dbReference>
<dbReference type="Pfam" id="PF01398">
    <property type="entry name" value="JAB"/>
    <property type="match status" value="1"/>
</dbReference>
<dbReference type="Pfam" id="PF23594">
    <property type="entry name" value="RPN11_C"/>
    <property type="match status" value="1"/>
</dbReference>
<dbReference type="SMART" id="SM00232">
    <property type="entry name" value="JAB_MPN"/>
    <property type="match status" value="1"/>
</dbReference>
<dbReference type="SUPFAM" id="SSF102712">
    <property type="entry name" value="JAB1/MPN domain"/>
    <property type="match status" value="1"/>
</dbReference>
<dbReference type="PROSITE" id="PS50249">
    <property type="entry name" value="MPN"/>
    <property type="match status" value="1"/>
</dbReference>
<evidence type="ECO:0000250" key="1"/>
<evidence type="ECO:0000255" key="2">
    <source>
        <dbReference type="PROSITE-ProRule" id="PRU01182"/>
    </source>
</evidence>
<evidence type="ECO:0000269" key="3">
    <source>
    </source>
</evidence>
<evidence type="ECO:0000269" key="4">
    <source>
    </source>
</evidence>
<evidence type="ECO:0000305" key="5"/>
<sequence>MERLQRIFGAGGGLGHASPDSPTLDTSEQVYISSLALLKMLKHGRAGVPMEVMGLMLGEFVDEYTVRVVDVFAMPQSGTGVSVEAVDHVFQTNMLDMLKQTGRPEMVVGWYHSHPGFGCWLSGVDINTQQSFEALNQRAVAVVVDPIQSVKGKVVIDAFRSINPQTIMLGQEPRQTTSNLGHLNKPSIQALIHGLNRHYYSIAINYRKNELEEKMLLNLHKKKWTDGLTLRRFDTHSKTNEQTVQEMLSLAAKYNKAVQEEDELSPEKLAIVNVGRQDAKKHLEEHVSNLMSSNIVQTLGTMLDTVVF</sequence>
<name>PSDE_ARATH</name>
<keyword id="KW-0025">Alternative splicing</keyword>
<keyword id="KW-0378">Hydrolase</keyword>
<keyword id="KW-1017">Isopeptide bond</keyword>
<keyword id="KW-0479">Metal-binding</keyword>
<keyword id="KW-0482">Metalloprotease</keyword>
<keyword id="KW-0645">Protease</keyword>
<keyword id="KW-0647">Proteasome</keyword>
<keyword id="KW-1185">Reference proteome</keyword>
<keyword id="KW-0832">Ubl conjugation</keyword>
<keyword id="KW-0833">Ubl conjugation pathway</keyword>
<keyword id="KW-0862">Zinc</keyword>
<feature type="chain" id="PRO_0000213956" description="26S proteasome non-ATPase regulatory subunit 14 homolog">
    <location>
        <begin position="1"/>
        <end position="308"/>
    </location>
</feature>
<feature type="domain" description="MPN" evidence="2">
    <location>
        <begin position="30"/>
        <end position="165"/>
    </location>
</feature>
<feature type="short sequence motif" description="JAMM motif" evidence="2">
    <location>
        <begin position="112"/>
        <end position="125"/>
    </location>
</feature>
<feature type="binding site" evidence="2">
    <location>
        <position position="112"/>
    </location>
    <ligand>
        <name>Zn(2+)</name>
        <dbReference type="ChEBI" id="CHEBI:29105"/>
        <note>catalytic</note>
    </ligand>
</feature>
<feature type="binding site" evidence="2">
    <location>
        <position position="114"/>
    </location>
    <ligand>
        <name>Zn(2+)</name>
        <dbReference type="ChEBI" id="CHEBI:29105"/>
        <note>catalytic</note>
    </ligand>
</feature>
<feature type="binding site" evidence="2">
    <location>
        <position position="125"/>
    </location>
    <ligand>
        <name>Zn(2+)</name>
        <dbReference type="ChEBI" id="CHEBI:29105"/>
        <note>catalytic</note>
    </ligand>
</feature>
<feature type="cross-link" description="Glycyl lysine isopeptide (Lys-Gly) (interchain with G-Cter in ubiquitin)" evidence="4">
    <location>
        <position position="238"/>
    </location>
</feature>
<feature type="sequence conflict" description="In Ref. 6; AAM64349." evidence="5" ref="6">
    <original>Q</original>
    <variation>H</variation>
    <location>
        <position position="171"/>
    </location>
</feature>
<comment type="function">
    <text evidence="1">Metalloprotease component of the 26S proteasome that specifically cleaves 'Lys-63'-linked polyubiquitin chains. The 26S proteasome is involved in the ATP-dependent degradation of ubiquitinated proteins. The function of the 'Lys-63'-specific deubiquitination of the proteasome is unclear (By similarity).</text>
</comment>
<comment type="subunit">
    <text evidence="3 4">Component of the 19S regulatory particle (RP/PA700) lid subcomplex of the 26S proteasome. The 26S proteasome is composed of a core protease (CP), known as the 20S proteasome, capped at one or both ends by the 19S regulatory particle (RP/PA700). The RP/PA700 complex is composed of at least 17 different subunits in two subcomplexes, the base and the lid, which form the portions proximal and distal to the 20S proteolytic core, respectively.</text>
</comment>
<comment type="alternative products">
    <event type="alternative splicing"/>
    <isoform>
        <id>Q9LT08-1</id>
        <name>1</name>
        <sequence type="displayed"/>
    </isoform>
    <text>A number of isoforms are produced. According to EST sequences.</text>
</comment>
<comment type="tissue specificity">
    <text evidence="3">Ubiquitous with highest expression in flowers.</text>
</comment>
<comment type="similarity">
    <text evidence="5">Belongs to the peptidase M67A family. PSMD14 subfamily.</text>
</comment>
<protein>
    <recommendedName>
        <fullName>26S proteasome non-ATPase regulatory subunit 14 homolog</fullName>
        <ecNumber>3.4.19.-</ecNumber>
    </recommendedName>
    <alternativeName>
        <fullName>26S proteasome regulatory subunit RPN11</fullName>
        <shortName>AtRPN11</shortName>
    </alternativeName>
</protein>